<sequence length="335" mass="39245">MKKEQVLNCQFSQWYPRFKKLSIRSVVIPLPENVKDYLLDDGTLVVSGREESPGCSQRDLNSTAEDEVQWSDDENTATLKAPEFPEFSIKVQEAINSLGGSVFPKLNWSSPRDAYWIALNSSLKCQTLSDIFLLFKSSDFVTHDFTQPFIYCADDSPDPNIKYELVLRKWCELIPGAEFRCFVKENNLIGISQRDYTQYYDHISKQKEEIRKSIQYFFQEHIQYNFPDEDFVFDVYKDSQGKIWLIDFNPFGEVTDSLLFTWDELRRSWNLSDVENEEQDCPTFRYTNSEVTVQPSPFLSYRLPKDFVDLSTGEDAHKLIDFLKLNRNEQDEDSD</sequence>
<gene>
    <name type="primary">cdc123</name>
</gene>
<comment type="function">
    <text evidence="1 2">ATP-dependent protein-folding chaperone for the eIF2 complex (By similarity). Binds to the gamma subunit of the eIF2 complex which allows the subunit to assemble with the alpha and beta subunits (By similarity).</text>
</comment>
<comment type="subcellular location">
    <subcellularLocation>
        <location evidence="3">Cytoplasm</location>
    </subcellularLocation>
</comment>
<comment type="similarity">
    <text evidence="5">Belongs to the CDC123 family.</text>
</comment>
<keyword id="KW-0067">ATP-binding</keyword>
<keyword id="KW-0143">Chaperone</keyword>
<keyword id="KW-0963">Cytoplasm</keyword>
<keyword id="KW-0460">Magnesium</keyword>
<keyword id="KW-0479">Metal-binding</keyword>
<keyword id="KW-0547">Nucleotide-binding</keyword>
<keyword id="KW-1185">Reference proteome</keyword>
<evidence type="ECO:0000250" key="1">
    <source>
        <dbReference type="UniProtKB" id="O75794"/>
    </source>
</evidence>
<evidence type="ECO:0000250" key="2">
    <source>
        <dbReference type="UniProtKB" id="Q05791"/>
    </source>
</evidence>
<evidence type="ECO:0000250" key="3">
    <source>
        <dbReference type="UniProtKB" id="Q62834"/>
    </source>
</evidence>
<evidence type="ECO:0000250" key="4">
    <source>
        <dbReference type="UniProtKB" id="Q9P7N5"/>
    </source>
</evidence>
<evidence type="ECO:0000305" key="5"/>
<feature type="chain" id="PRO_0000228668" description="Translation initiation factor eIF2 assembly protein">
    <location>
        <begin position="1"/>
        <end position="335"/>
    </location>
</feature>
<feature type="binding site" evidence="1">
    <location>
        <position position="105"/>
    </location>
    <ligand>
        <name>ATP</name>
        <dbReference type="ChEBI" id="CHEBI:30616"/>
    </ligand>
</feature>
<feature type="binding site" evidence="1">
    <location>
        <position position="108"/>
    </location>
    <ligand>
        <name>ATP</name>
        <dbReference type="ChEBI" id="CHEBI:30616"/>
    </ligand>
</feature>
<feature type="binding site" evidence="4">
    <location>
        <position position="110"/>
    </location>
    <ligand>
        <name>ATP</name>
        <dbReference type="ChEBI" id="CHEBI:30616"/>
    </ligand>
</feature>
<feature type="binding site" evidence="4">
    <location>
        <position position="112"/>
    </location>
    <ligand>
        <name>ATP</name>
        <dbReference type="ChEBI" id="CHEBI:30616"/>
    </ligand>
</feature>
<feature type="binding site" evidence="4">
    <location>
        <position position="168"/>
    </location>
    <ligand>
        <name>ATP</name>
        <dbReference type="ChEBI" id="CHEBI:30616"/>
    </ligand>
</feature>
<feature type="binding site" evidence="1">
    <location>
        <position position="169"/>
    </location>
    <ligand>
        <name>ATP</name>
        <dbReference type="ChEBI" id="CHEBI:30616"/>
    </ligand>
</feature>
<feature type="binding site" evidence="4">
    <location>
        <position position="170"/>
    </location>
    <ligand>
        <name>ATP</name>
        <dbReference type="ChEBI" id="CHEBI:30616"/>
    </ligand>
</feature>
<feature type="binding site" evidence="1">
    <location>
        <position position="171"/>
    </location>
    <ligand>
        <name>ATP</name>
        <dbReference type="ChEBI" id="CHEBI:30616"/>
    </ligand>
</feature>
<feature type="binding site" evidence="1">
    <location>
        <position position="178"/>
    </location>
    <ligand>
        <name>ATP</name>
        <dbReference type="ChEBI" id="CHEBI:30616"/>
    </ligand>
</feature>
<feature type="binding site" evidence="1">
    <location>
        <position position="180"/>
    </location>
    <ligand>
        <name>ATP</name>
        <dbReference type="ChEBI" id="CHEBI:30616"/>
    </ligand>
</feature>
<feature type="binding site" evidence="1">
    <location>
        <position position="194"/>
    </location>
    <ligand>
        <name>ATP</name>
        <dbReference type="ChEBI" id="CHEBI:30616"/>
    </ligand>
</feature>
<feature type="binding site" evidence="4">
    <location>
        <position position="234"/>
    </location>
    <ligand>
        <name>ATP</name>
        <dbReference type="ChEBI" id="CHEBI:30616"/>
    </ligand>
</feature>
<feature type="binding site" evidence="1">
    <location>
        <position position="247"/>
    </location>
    <ligand>
        <name>ATP</name>
        <dbReference type="ChEBI" id="CHEBI:30616"/>
    </ligand>
</feature>
<feature type="binding site" evidence="1">
    <location>
        <position position="247"/>
    </location>
    <ligand>
        <name>Mg(2+)</name>
        <dbReference type="ChEBI" id="CHEBI:18420"/>
    </ligand>
</feature>
<feature type="binding site" evidence="1">
    <location>
        <position position="249"/>
    </location>
    <ligand>
        <name>ATP</name>
        <dbReference type="ChEBI" id="CHEBI:30616"/>
    </ligand>
</feature>
<feature type="binding site" evidence="1">
    <location>
        <position position="249"/>
    </location>
    <ligand>
        <name>Mg(2+)</name>
        <dbReference type="ChEBI" id="CHEBI:18420"/>
    </ligand>
</feature>
<dbReference type="EMBL" id="BC091008">
    <property type="protein sequence ID" value="AAH91008.1"/>
    <property type="molecule type" value="mRNA"/>
</dbReference>
<dbReference type="RefSeq" id="NP_001017200.2">
    <property type="nucleotide sequence ID" value="NM_001017200.3"/>
</dbReference>
<dbReference type="SMR" id="Q5BKN5"/>
<dbReference type="FunCoup" id="Q5BKN5">
    <property type="interactions" value="1993"/>
</dbReference>
<dbReference type="STRING" id="8364.ENSXETP00000020874"/>
<dbReference type="PaxDb" id="8364-ENSXETP00000019981"/>
<dbReference type="DNASU" id="549954"/>
<dbReference type="GeneID" id="549954"/>
<dbReference type="KEGG" id="xtr:549954"/>
<dbReference type="AGR" id="Xenbase:XB-GENE-952729"/>
<dbReference type="CTD" id="8872"/>
<dbReference type="Xenbase" id="XB-GENE-952729">
    <property type="gene designation" value="cdc123"/>
</dbReference>
<dbReference type="eggNOG" id="KOG2983">
    <property type="taxonomic scope" value="Eukaryota"/>
</dbReference>
<dbReference type="HOGENOM" id="CLU_034402_0_0_1"/>
<dbReference type="InParanoid" id="Q5BKN5"/>
<dbReference type="OMA" id="TFPDPNF"/>
<dbReference type="OrthoDB" id="360540at2759"/>
<dbReference type="PhylomeDB" id="Q5BKN5"/>
<dbReference type="Proteomes" id="UP000008143">
    <property type="component" value="Chromosome 3"/>
</dbReference>
<dbReference type="Bgee" id="ENSXETG00000009109">
    <property type="expression patterns" value="Expressed in egg cell and 15 other cell types or tissues"/>
</dbReference>
<dbReference type="GO" id="GO:0005737">
    <property type="term" value="C:cytoplasm"/>
    <property type="evidence" value="ECO:0000250"/>
    <property type="project" value="UniProtKB"/>
</dbReference>
<dbReference type="GO" id="GO:0005524">
    <property type="term" value="F:ATP binding"/>
    <property type="evidence" value="ECO:0000250"/>
    <property type="project" value="UniProtKB"/>
</dbReference>
<dbReference type="GO" id="GO:0000287">
    <property type="term" value="F:magnesium ion binding"/>
    <property type="evidence" value="ECO:0000250"/>
    <property type="project" value="UniProtKB"/>
</dbReference>
<dbReference type="GO" id="GO:0044183">
    <property type="term" value="F:protein folding chaperone"/>
    <property type="evidence" value="ECO:0000250"/>
    <property type="project" value="UniProtKB"/>
</dbReference>
<dbReference type="GO" id="GO:1905143">
    <property type="term" value="P:eukaryotic translation initiation factor 2 complex assembly"/>
    <property type="evidence" value="ECO:0000250"/>
    <property type="project" value="UniProtKB"/>
</dbReference>
<dbReference type="InterPro" id="IPR009772">
    <property type="entry name" value="CDC123"/>
</dbReference>
<dbReference type="PANTHER" id="PTHR15323:SF6">
    <property type="entry name" value="CELL DIVISION CYCLE PROTEIN 123 HOMOLOG"/>
    <property type="match status" value="1"/>
</dbReference>
<dbReference type="PANTHER" id="PTHR15323">
    <property type="entry name" value="D123 PROTEIN"/>
    <property type="match status" value="1"/>
</dbReference>
<dbReference type="Pfam" id="PF07065">
    <property type="entry name" value="D123"/>
    <property type="match status" value="1"/>
</dbReference>
<dbReference type="PIRSF" id="PIRSF007807">
    <property type="entry name" value="Cdc123"/>
    <property type="match status" value="1"/>
</dbReference>
<accession>Q5BKN5</accession>
<protein>
    <recommendedName>
        <fullName evidence="5">Translation initiation factor eIF2 assembly protein</fullName>
    </recommendedName>
    <alternativeName>
        <fullName>Cell division cycle protein 123 homolog</fullName>
    </alternativeName>
</protein>
<reference key="1">
    <citation type="submission" date="2005-03" db="EMBL/GenBank/DDBJ databases">
        <authorList>
            <consortium name="NIH - Xenopus Gene Collection (XGC) project"/>
        </authorList>
    </citation>
    <scope>NUCLEOTIDE SEQUENCE [LARGE SCALE MRNA]</scope>
</reference>
<name>CD123_XENTR</name>
<proteinExistence type="evidence at transcript level"/>
<organism>
    <name type="scientific">Xenopus tropicalis</name>
    <name type="common">Western clawed frog</name>
    <name type="synonym">Silurana tropicalis</name>
    <dbReference type="NCBI Taxonomy" id="8364"/>
    <lineage>
        <taxon>Eukaryota</taxon>
        <taxon>Metazoa</taxon>
        <taxon>Chordata</taxon>
        <taxon>Craniata</taxon>
        <taxon>Vertebrata</taxon>
        <taxon>Euteleostomi</taxon>
        <taxon>Amphibia</taxon>
        <taxon>Batrachia</taxon>
        <taxon>Anura</taxon>
        <taxon>Pipoidea</taxon>
        <taxon>Pipidae</taxon>
        <taxon>Xenopodinae</taxon>
        <taxon>Xenopus</taxon>
        <taxon>Silurana</taxon>
    </lineage>
</organism>